<accession>Q22165</accession>
<accession>Q9N644</accession>
<reference key="1">
    <citation type="journal article" date="1998" name="Science">
        <title>Genome sequence of the nematode C. elegans: a platform for investigating biology.</title>
        <authorList>
            <consortium name="The C. elegans sequencing consortium"/>
        </authorList>
    </citation>
    <scope>NUCLEOTIDE SEQUENCE [LARGE SCALE GENOMIC DNA]</scope>
    <source>
        <strain>Bristol N2</strain>
    </source>
</reference>
<comment type="subcellular location">
    <subcellularLocation>
        <location evidence="2">Membrane</location>
        <topology evidence="2">Single-pass membrane protein</topology>
    </subcellularLocation>
</comment>
<comment type="similarity">
    <text evidence="2">Belongs to the band 7/mec-2 family.</text>
</comment>
<dbReference type="EMBL" id="AL032659">
    <property type="protein sequence ID" value="CAB82215.1"/>
    <property type="molecule type" value="Genomic_DNA"/>
</dbReference>
<dbReference type="EMBL" id="Z66565">
    <property type="protein sequence ID" value="CAB82215.1"/>
    <property type="status" value="JOINED"/>
    <property type="molecule type" value="Genomic_DNA"/>
</dbReference>
<dbReference type="RefSeq" id="NP_509944.1">
    <property type="nucleotide sequence ID" value="NM_077543.5"/>
</dbReference>
<dbReference type="SMR" id="Q22165"/>
<dbReference type="FunCoup" id="Q22165">
    <property type="interactions" value="675"/>
</dbReference>
<dbReference type="STRING" id="6239.Y71H9A.3.1"/>
<dbReference type="PaxDb" id="6239-Y71H9A.3.1"/>
<dbReference type="PeptideAtlas" id="Q22165"/>
<dbReference type="EnsemblMetazoa" id="Y71H9A.3.1">
    <property type="protein sequence ID" value="Y71H9A.3.1"/>
    <property type="gene ID" value="WBGene00006066"/>
</dbReference>
<dbReference type="EnsemblMetazoa" id="Y71H9A.3.2">
    <property type="protein sequence ID" value="Y71H9A.3.2"/>
    <property type="gene ID" value="WBGene00006066"/>
</dbReference>
<dbReference type="GeneID" id="181350"/>
<dbReference type="KEGG" id="cel:CELE_Y71H9A.3"/>
<dbReference type="UCSC" id="Y71H9A.3.1">
    <property type="organism name" value="c. elegans"/>
</dbReference>
<dbReference type="AGR" id="WB:WBGene00006066"/>
<dbReference type="CTD" id="181350"/>
<dbReference type="WormBase" id="Y71H9A.3">
    <property type="protein sequence ID" value="CE22957"/>
    <property type="gene ID" value="WBGene00006066"/>
    <property type="gene designation" value="sto-4"/>
</dbReference>
<dbReference type="eggNOG" id="KOG2621">
    <property type="taxonomic scope" value="Eukaryota"/>
</dbReference>
<dbReference type="GeneTree" id="ENSGT01030000234614"/>
<dbReference type="HOGENOM" id="CLU_024949_3_0_1"/>
<dbReference type="InParanoid" id="Q22165"/>
<dbReference type="OMA" id="SACACIK"/>
<dbReference type="OrthoDB" id="2105077at2759"/>
<dbReference type="PhylomeDB" id="Q22165"/>
<dbReference type="PRO" id="PR:Q22165"/>
<dbReference type="Proteomes" id="UP000001940">
    <property type="component" value="Chromosome X"/>
</dbReference>
<dbReference type="Bgee" id="WBGene00006066">
    <property type="expression patterns" value="Expressed in larva and 4 other cell types or tissues"/>
</dbReference>
<dbReference type="GO" id="GO:0005886">
    <property type="term" value="C:plasma membrane"/>
    <property type="evidence" value="ECO:0000318"/>
    <property type="project" value="GO_Central"/>
</dbReference>
<dbReference type="FunFam" id="3.30.479.30:FF:000002">
    <property type="entry name" value="band 7 protein AGAP004871"/>
    <property type="match status" value="1"/>
</dbReference>
<dbReference type="Gene3D" id="6.10.250.2090">
    <property type="match status" value="1"/>
</dbReference>
<dbReference type="Gene3D" id="3.30.479.30">
    <property type="entry name" value="Band 7 domain"/>
    <property type="match status" value="1"/>
</dbReference>
<dbReference type="InterPro" id="IPR043202">
    <property type="entry name" value="Band-7_stomatin-like"/>
</dbReference>
<dbReference type="InterPro" id="IPR001107">
    <property type="entry name" value="Band_7"/>
</dbReference>
<dbReference type="InterPro" id="IPR036013">
    <property type="entry name" value="Band_7/SPFH_dom_sf"/>
</dbReference>
<dbReference type="InterPro" id="IPR018080">
    <property type="entry name" value="Band_7/stomatin-like_CS"/>
</dbReference>
<dbReference type="InterPro" id="IPR001972">
    <property type="entry name" value="Stomatin_HflK_fam"/>
</dbReference>
<dbReference type="PANTHER" id="PTHR10264">
    <property type="entry name" value="BAND 7 PROTEIN-RELATED"/>
    <property type="match status" value="1"/>
</dbReference>
<dbReference type="PANTHER" id="PTHR10264:SF131">
    <property type="entry name" value="STOMATIN-4"/>
    <property type="match status" value="1"/>
</dbReference>
<dbReference type="Pfam" id="PF01145">
    <property type="entry name" value="Band_7"/>
    <property type="match status" value="1"/>
</dbReference>
<dbReference type="PRINTS" id="PR00721">
    <property type="entry name" value="STOMATIN"/>
</dbReference>
<dbReference type="SMART" id="SM00244">
    <property type="entry name" value="PHB"/>
    <property type="match status" value="1"/>
</dbReference>
<dbReference type="SUPFAM" id="SSF117892">
    <property type="entry name" value="Band 7/SPFH domain"/>
    <property type="match status" value="1"/>
</dbReference>
<dbReference type="PROSITE" id="PS01270">
    <property type="entry name" value="BAND_7"/>
    <property type="match status" value="1"/>
</dbReference>
<evidence type="ECO:0000255" key="1"/>
<evidence type="ECO:0000305" key="2"/>
<protein>
    <recommendedName>
        <fullName>Stomatin-4</fullName>
    </recommendedName>
</protein>
<feature type="chain" id="PRO_0000094042" description="Stomatin-4">
    <location>
        <begin position="1"/>
        <end position="281"/>
    </location>
</feature>
<feature type="transmembrane region" description="Helical" evidence="1">
    <location>
        <begin position="28"/>
        <end position="48"/>
    </location>
</feature>
<proteinExistence type="inferred from homology"/>
<sequence>MQRQGTVRAPCSRIVDPHQKVNYTVCGWIITIISYLVVLFTLPLSAFFCLKVVQEYERAVIFRLGRLKHGGARGPGIFFIIPCIESFKKIDLRVVSFDVPPQEILSKDSVTVSVDAVIYFRISNATVSVINVEDAARSTKLLAQTTLRNFLGTRTLAEMLSSRDAISMQMQAALDEATDPWGVKVERVEIKDVRLPIQLQRAMAAEAEAARAAGAKIIAAEGEQLASRALADAADVIATSPCAIQLRYLQTLNSISSEKNNTIIFPFPTELIAKFIQSAAA</sequence>
<name>STO4_CAEEL</name>
<organism>
    <name type="scientific">Caenorhabditis elegans</name>
    <dbReference type="NCBI Taxonomy" id="6239"/>
    <lineage>
        <taxon>Eukaryota</taxon>
        <taxon>Metazoa</taxon>
        <taxon>Ecdysozoa</taxon>
        <taxon>Nematoda</taxon>
        <taxon>Chromadorea</taxon>
        <taxon>Rhabditida</taxon>
        <taxon>Rhabditina</taxon>
        <taxon>Rhabditomorpha</taxon>
        <taxon>Rhabditoidea</taxon>
        <taxon>Rhabditidae</taxon>
        <taxon>Peloderinae</taxon>
        <taxon>Caenorhabditis</taxon>
    </lineage>
</organism>
<keyword id="KW-0472">Membrane</keyword>
<keyword id="KW-1185">Reference proteome</keyword>
<keyword id="KW-0812">Transmembrane</keyword>
<keyword id="KW-1133">Transmembrane helix</keyword>
<gene>
    <name type="primary">sto-4</name>
    <name type="ORF">Y71H9A.3/T04F8.5</name>
</gene>